<evidence type="ECO:0000255" key="1">
    <source>
        <dbReference type="HAMAP-Rule" id="MF_00378"/>
    </source>
</evidence>
<protein>
    <recommendedName>
        <fullName evidence="1">Exodeoxyribonuclease 7 large subunit</fullName>
        <ecNumber evidence="1">3.1.11.6</ecNumber>
    </recommendedName>
    <alternativeName>
        <fullName evidence="1">Exodeoxyribonuclease VII large subunit</fullName>
        <shortName evidence="1">Exonuclease VII large subunit</shortName>
    </alternativeName>
</protein>
<feature type="chain" id="PRO_1000048770" description="Exodeoxyribonuclease 7 large subunit">
    <location>
        <begin position="1"/>
        <end position="401"/>
    </location>
</feature>
<organism>
    <name type="scientific">Clostridium botulinum (strain Langeland / NCTC 10281 / Type F)</name>
    <dbReference type="NCBI Taxonomy" id="441772"/>
    <lineage>
        <taxon>Bacteria</taxon>
        <taxon>Bacillati</taxon>
        <taxon>Bacillota</taxon>
        <taxon>Clostridia</taxon>
        <taxon>Eubacteriales</taxon>
        <taxon>Clostridiaceae</taxon>
        <taxon>Clostridium</taxon>
    </lineage>
</organism>
<proteinExistence type="inferred from homology"/>
<keyword id="KW-0963">Cytoplasm</keyword>
<keyword id="KW-0269">Exonuclease</keyword>
<keyword id="KW-0378">Hydrolase</keyword>
<keyword id="KW-0540">Nuclease</keyword>
<accession>A7GEJ7</accession>
<sequence>MHIKTLTVSQLNRYVKNTLDADFILNNASVKGEISNLKIHSSGHIYFSLKDGGSKINCVMFKSYAYNLKFAPENGMDVVALGNVSVYEKEGSYQLYVKDMKREGIGDLYVAFEKLKEKLKEEELFDDVHKKEIPKFSKKVGVITSPTGAALKDIINVTKRRNKGIELLIYPALVQGTDASRTLIEGIKILNKVEDVDIIILARGGGSIEELWAFNNEELAYAVYNSKKPIITGVGHETDFTIVDFVSDRRAPTPSAAAEIAVFDREVLINEILNYKYNIKNYMENIIKEKRNYLNLYKQKIEANSPTNIIVNEYKNIDNLKELLNMKIEGKLNKEKNNLSRLSSLLEAHNPLNVLKKGYTLIEDEGNNLITEKEALKKLNKINIIFKDGRAKLSIEYIEEF</sequence>
<name>EX7L_CLOBL</name>
<dbReference type="EC" id="3.1.11.6" evidence="1"/>
<dbReference type="EMBL" id="CP000728">
    <property type="protein sequence ID" value="ABS42702.1"/>
    <property type="molecule type" value="Genomic_DNA"/>
</dbReference>
<dbReference type="RefSeq" id="WP_012099922.1">
    <property type="nucleotide sequence ID" value="NC_009699.1"/>
</dbReference>
<dbReference type="SMR" id="A7GEJ7"/>
<dbReference type="KEGG" id="cbf:CLI_1949"/>
<dbReference type="HOGENOM" id="CLU_023625_2_0_9"/>
<dbReference type="Proteomes" id="UP000002410">
    <property type="component" value="Chromosome"/>
</dbReference>
<dbReference type="GO" id="GO:0005737">
    <property type="term" value="C:cytoplasm"/>
    <property type="evidence" value="ECO:0007669"/>
    <property type="project" value="UniProtKB-SubCell"/>
</dbReference>
<dbReference type="GO" id="GO:0009318">
    <property type="term" value="C:exodeoxyribonuclease VII complex"/>
    <property type="evidence" value="ECO:0007669"/>
    <property type="project" value="InterPro"/>
</dbReference>
<dbReference type="GO" id="GO:0008855">
    <property type="term" value="F:exodeoxyribonuclease VII activity"/>
    <property type="evidence" value="ECO:0007669"/>
    <property type="project" value="UniProtKB-UniRule"/>
</dbReference>
<dbReference type="GO" id="GO:0003676">
    <property type="term" value="F:nucleic acid binding"/>
    <property type="evidence" value="ECO:0007669"/>
    <property type="project" value="InterPro"/>
</dbReference>
<dbReference type="GO" id="GO:0006308">
    <property type="term" value="P:DNA catabolic process"/>
    <property type="evidence" value="ECO:0007669"/>
    <property type="project" value="UniProtKB-UniRule"/>
</dbReference>
<dbReference type="CDD" id="cd04489">
    <property type="entry name" value="ExoVII_LU_OBF"/>
    <property type="match status" value="1"/>
</dbReference>
<dbReference type="HAMAP" id="MF_00378">
    <property type="entry name" value="Exonuc_7_L"/>
    <property type="match status" value="1"/>
</dbReference>
<dbReference type="InterPro" id="IPR003753">
    <property type="entry name" value="Exonuc_VII_L"/>
</dbReference>
<dbReference type="InterPro" id="IPR020579">
    <property type="entry name" value="Exonuc_VII_lsu_C"/>
</dbReference>
<dbReference type="InterPro" id="IPR025824">
    <property type="entry name" value="OB-fold_nuc-bd_dom"/>
</dbReference>
<dbReference type="NCBIfam" id="TIGR00237">
    <property type="entry name" value="xseA"/>
    <property type="match status" value="1"/>
</dbReference>
<dbReference type="PANTHER" id="PTHR30008">
    <property type="entry name" value="EXODEOXYRIBONUCLEASE 7 LARGE SUBUNIT"/>
    <property type="match status" value="1"/>
</dbReference>
<dbReference type="PANTHER" id="PTHR30008:SF0">
    <property type="entry name" value="EXODEOXYRIBONUCLEASE 7 LARGE SUBUNIT"/>
    <property type="match status" value="1"/>
</dbReference>
<dbReference type="Pfam" id="PF02601">
    <property type="entry name" value="Exonuc_VII_L"/>
    <property type="match status" value="2"/>
</dbReference>
<dbReference type="Pfam" id="PF13742">
    <property type="entry name" value="tRNA_anti_2"/>
    <property type="match status" value="1"/>
</dbReference>
<comment type="function">
    <text evidence="1">Bidirectionally degrades single-stranded DNA into large acid-insoluble oligonucleotides, which are then degraded further into small acid-soluble oligonucleotides.</text>
</comment>
<comment type="catalytic activity">
    <reaction evidence="1">
        <text>Exonucleolytic cleavage in either 5'- to 3'- or 3'- to 5'-direction to yield nucleoside 5'-phosphates.</text>
        <dbReference type="EC" id="3.1.11.6"/>
    </reaction>
</comment>
<comment type="subunit">
    <text evidence="1">Heterooligomer composed of large and small subunits.</text>
</comment>
<comment type="subcellular location">
    <subcellularLocation>
        <location evidence="1">Cytoplasm</location>
    </subcellularLocation>
</comment>
<comment type="similarity">
    <text evidence="1">Belongs to the XseA family.</text>
</comment>
<gene>
    <name evidence="1" type="primary">xseA</name>
    <name type="ordered locus">CLI_1949</name>
</gene>
<reference key="1">
    <citation type="submission" date="2007-06" db="EMBL/GenBank/DDBJ databases">
        <authorList>
            <person name="Brinkac L.M."/>
            <person name="Daugherty S."/>
            <person name="Dodson R.J."/>
            <person name="Madupu R."/>
            <person name="Brown J.L."/>
            <person name="Bruce D."/>
            <person name="Detter C."/>
            <person name="Munk C."/>
            <person name="Smith L.A."/>
            <person name="Smith T.J."/>
            <person name="White O."/>
            <person name="Brettin T.S."/>
        </authorList>
    </citation>
    <scope>NUCLEOTIDE SEQUENCE [LARGE SCALE GENOMIC DNA]</scope>
    <source>
        <strain>Langeland / NCTC 10281 / Type F</strain>
    </source>
</reference>